<dbReference type="EMBL" id="KJ412258">
    <property type="protein sequence ID" value="AHX39301.1"/>
    <property type="molecule type" value="Genomic_DNA"/>
</dbReference>
<dbReference type="PaxDb" id="4932-YHR063W-A"/>
<dbReference type="EnsemblFungi" id="YHR063W-A_mRNA">
    <property type="protein sequence ID" value="YHR063W-A"/>
    <property type="gene ID" value="YHR063W-A"/>
</dbReference>
<dbReference type="AGR" id="SGD:S000028778"/>
<dbReference type="SGD" id="S000028778">
    <property type="gene designation" value="YHR063W-A"/>
</dbReference>
<dbReference type="HOGENOM" id="CLU_2159853_0_0_1"/>
<dbReference type="GO" id="GO:0016020">
    <property type="term" value="C:membrane"/>
    <property type="evidence" value="ECO:0007669"/>
    <property type="project" value="UniProtKB-SubCell"/>
</dbReference>
<feature type="chain" id="PRO_0000431022" description="Putative uncharacterized membrane protein YHR063W-A">
    <location>
        <begin position="1"/>
        <end position="111"/>
    </location>
</feature>
<feature type="transmembrane region" description="Helical; Name=1" evidence="1">
    <location>
        <begin position="7"/>
        <end position="29"/>
    </location>
</feature>
<feature type="transmembrane region" description="Helical; Name=2" evidence="1">
    <location>
        <begin position="49"/>
        <end position="71"/>
    </location>
</feature>
<protein>
    <recommendedName>
        <fullName evidence="2">Putative uncharacterized membrane protein YHR063W-A</fullName>
    </recommendedName>
</protein>
<organism>
    <name type="scientific">Saccharomyces cerevisiae (strain ATCC 204508 / S288c)</name>
    <name type="common">Baker's yeast</name>
    <dbReference type="NCBI Taxonomy" id="559292"/>
    <lineage>
        <taxon>Eukaryota</taxon>
        <taxon>Fungi</taxon>
        <taxon>Dikarya</taxon>
        <taxon>Ascomycota</taxon>
        <taxon>Saccharomycotina</taxon>
        <taxon>Saccharomycetes</taxon>
        <taxon>Saccharomycetales</taxon>
        <taxon>Saccharomycetaceae</taxon>
        <taxon>Saccharomyces</taxon>
    </lineage>
</organism>
<proteinExistence type="uncertain"/>
<comment type="subcellular location">
    <subcellularLocation>
        <location evidence="1">Membrane</location>
        <topology evidence="1">Multi-pass membrane protein</topology>
    </subcellularLocation>
</comment>
<comment type="miscellaneous">
    <text evidence="2">Partially overlaps SSZ1.</text>
</comment>
<comment type="caution">
    <text evidence="3">Product of a dubious gene prediction unlikely to encode a functional protein. Because of that it is not part of the S.cerevisiae S288c complete/reference proteome set.</text>
</comment>
<evidence type="ECO:0000255" key="1"/>
<evidence type="ECO:0000305" key="2"/>
<evidence type="ECO:0000305" key="3">
    <source>
    </source>
</evidence>
<evidence type="ECO:0000312" key="4">
    <source>
        <dbReference type="SGD" id="S000028778"/>
    </source>
</evidence>
<reference key="1">
    <citation type="journal article" date="1994" name="Science">
        <title>Complete nucleotide sequence of Saccharomyces cerevisiae chromosome VIII.</title>
        <authorList>
            <person name="Johnston M."/>
            <person name="Andrews S."/>
            <person name="Brinkman R."/>
            <person name="Cooper J."/>
            <person name="Ding H."/>
            <person name="Dover J."/>
            <person name="Du Z."/>
            <person name="Favello A."/>
            <person name="Fulton L."/>
            <person name="Gattung S."/>
            <person name="Geisel C."/>
            <person name="Kirsten J."/>
            <person name="Kucaba T."/>
            <person name="Hillier L.W."/>
            <person name="Jier M."/>
            <person name="Johnston L."/>
            <person name="Langston Y."/>
            <person name="Latreille P."/>
            <person name="Louis E.J."/>
            <person name="Macri C."/>
            <person name="Mardis E."/>
            <person name="Menezes S."/>
            <person name="Mouser L."/>
            <person name="Nhan M."/>
            <person name="Rifkin L."/>
            <person name="Riles L."/>
            <person name="St Peter H."/>
            <person name="Trevaskis E."/>
            <person name="Vaughan K."/>
            <person name="Vignati D."/>
            <person name="Wilcox L."/>
            <person name="Wohldman P."/>
            <person name="Waterston R."/>
            <person name="Wilson R."/>
            <person name="Vaudin M."/>
        </authorList>
    </citation>
    <scope>NUCLEOTIDE SEQUENCE [LARGE SCALE GENOMIC DNA]</scope>
    <source>
        <strain>ATCC 204508 / S288c</strain>
    </source>
</reference>
<reference key="2">
    <citation type="journal article" date="2014" name="G3 (Bethesda)">
        <title>The reference genome sequence of Saccharomyces cerevisiae: Then and now.</title>
        <authorList>
            <person name="Engel S.R."/>
            <person name="Dietrich F.S."/>
            <person name="Fisk D.G."/>
            <person name="Binkley G."/>
            <person name="Balakrishnan R."/>
            <person name="Costanzo M.C."/>
            <person name="Dwight S.S."/>
            <person name="Hitz B.C."/>
            <person name="Karra K."/>
            <person name="Nash R.S."/>
            <person name="Weng S."/>
            <person name="Wong E.D."/>
            <person name="Lloyd P."/>
            <person name="Skrzypek M.S."/>
            <person name="Miyasato S.R."/>
            <person name="Simison M."/>
            <person name="Cherry J.M."/>
        </authorList>
    </citation>
    <scope>GENOME REANNOTATION</scope>
    <source>
        <strain>ATCC 204508 / S288c</strain>
    </source>
</reference>
<sequence>MFFFQGLYSSIMYVFFYIRIHTVFLRALYNSPFTALPVFKSLAVTLKAPSLLMLKIISTPLAFLIPNSINLVPKVYSFSLTTSGSSSDHSLSSSSSAFSSFGIGSKVFSSM</sequence>
<gene>
    <name evidence="4" type="ordered locus">YHR063W-A</name>
</gene>
<name>YH063_YEAST</name>
<keyword id="KW-0472">Membrane</keyword>
<keyword id="KW-0812">Transmembrane</keyword>
<keyword id="KW-1133">Transmembrane helix</keyword>
<accession>A0A023PZE1</accession>